<dbReference type="EMBL" id="L22858">
    <property type="protein sequence ID" value="AAA66696.1"/>
    <property type="molecule type" value="Genomic_DNA"/>
</dbReference>
<dbReference type="PIR" id="C72858">
    <property type="entry name" value="C72858"/>
</dbReference>
<dbReference type="SMR" id="P41467"/>
<dbReference type="KEGG" id="vg:1403899"/>
<dbReference type="OrthoDB" id="1496at10239"/>
<dbReference type="Proteomes" id="UP000008292">
    <property type="component" value="Segment"/>
</dbReference>
<dbReference type="GO" id="GO:0030430">
    <property type="term" value="C:host cell cytoplasm"/>
    <property type="evidence" value="ECO:0007669"/>
    <property type="project" value="UniProtKB-SubCell"/>
</dbReference>
<dbReference type="GO" id="GO:0042025">
    <property type="term" value="C:host cell nucleus"/>
    <property type="evidence" value="ECO:0007669"/>
    <property type="project" value="UniProtKB-SubCell"/>
</dbReference>
<dbReference type="InterPro" id="IPR009615">
    <property type="entry name" value="Desmo_N"/>
</dbReference>
<dbReference type="Pfam" id="PF06771">
    <property type="entry name" value="Desmo_N"/>
    <property type="match status" value="1"/>
</dbReference>
<name>AC66_NPVAC</name>
<feature type="chain" id="PRO_0000133003" description="Protein Ac66">
    <location>
        <begin position="1"/>
        <end position="808"/>
    </location>
</feature>
<feature type="region of interest" description="Disordered" evidence="1">
    <location>
        <begin position="132"/>
        <end position="151"/>
    </location>
</feature>
<feature type="compositionally biased region" description="Pro residues" evidence="1">
    <location>
        <begin position="132"/>
        <end position="141"/>
    </location>
</feature>
<organismHost>
    <name type="scientific">Lepidoptera</name>
    <name type="common">butterflies and moths</name>
    <dbReference type="NCBI Taxonomy" id="7088"/>
</organismHost>
<gene>
    <name type="primary">Ac66</name>
    <name type="ORF">ORF66</name>
</gene>
<organism>
    <name type="scientific">Autographa californica nuclear polyhedrosis virus</name>
    <name type="common">AcMNPV</name>
    <dbReference type="NCBI Taxonomy" id="46015"/>
    <lineage>
        <taxon>Viruses</taxon>
        <taxon>Viruses incertae sedis</taxon>
        <taxon>Naldaviricetes</taxon>
        <taxon>Lefavirales</taxon>
        <taxon>Baculoviridae</taxon>
        <taxon>Alphabaculovirus</taxon>
        <taxon>Alphabaculovirus aucalifornicae</taxon>
    </lineage>
</organism>
<evidence type="ECO:0000256" key="1">
    <source>
        <dbReference type="SAM" id="MobiDB-lite"/>
    </source>
</evidence>
<evidence type="ECO:0000269" key="2">
    <source>
    </source>
</evidence>
<evidence type="ECO:0000269" key="3">
    <source>
    </source>
</evidence>
<protein>
    <recommendedName>
        <fullName>Protein Ac66</fullName>
    </recommendedName>
</protein>
<sequence length="808" mass="93973">MQRWPKYGGTDVNTRTVHDLLNTINTMSARIKTLERYEHALREIHKVVVILKPSANTHSFEPDALPALIMQFLSDFAGRDINTLTHNINYKYDYNYPPAPVPAMQPPPPPPQPPAPPQPPYYNNYPYYPPYPFSTPPPTQPPESNVAGVGGSQSLNQITLTNEEESELAALFKNMQTNMTWELVQNFVEVLIRIVRVHVVNNVTMINVISSITSVRTLIDYNFTEFIRCVYQKTNIRFAIDQYLCTNIVTFIDFFTRVFYLVMRTNFQFTTFDQLTQYSNELYTRIQTSILQSAAPLSPPTVETVNSDIVISNLQEQLKRERALMQQISEQHRIANERVETLQSQYDELDLKYKEIFEDKSEFAQQKSENVRKIKQLERSNKELNDTVQKLRDENAERLSEIQLQKGDLDEYKNMNRQLNEDIYKLKRRIESTFDKDYVETLNDKIESLEKQLDDKQNLNRELRSSISKIDETTQRYKLDAKDIMELKQSVSIKDQEIAMKNAQYLELSAIYQQTVNELTATKNELSQVATTNQSLFAENEESKVLLEGTLAFIDSFYQIIMQIEKPDYVPISKPQLTAQESIYQTDYIKDWLQKLRSKLSNADVANLQSVSELSDLKSQIISIVPRNIVNRILKENYKVKVENVNAELLESVAVTSAVSALVQQYERSEKQNVKLRQEFEIKLNDLQRLLEQNQTDFESISEFISRDPAFNRNLNDERFQNLRQQYDEMSSKYSALETTKIKEMESIADQAVKSEMSKLNTQLDELNSLFVKYNRKAQDIFEWKTSMLKRYETLARTTAASVQPNVE</sequence>
<proteinExistence type="evidence at protein level"/>
<accession>P41467</accession>
<reference key="1">
    <citation type="journal article" date="1994" name="Virology">
        <title>The complete DNA sequence of Autographa californica nuclear polyhedrosis virus.</title>
        <authorList>
            <person name="Ayres M.D."/>
            <person name="Howard S.C."/>
            <person name="Kuzio J."/>
            <person name="Lopez-Ferber M."/>
            <person name="Possee R.D."/>
        </authorList>
    </citation>
    <scope>NUCLEOTIDE SEQUENCE [LARGE SCALE GENOMIC DNA]</scope>
    <source>
        <strain>C6</strain>
    </source>
</reference>
<reference key="2">
    <citation type="journal article" date="2008" name="Virology">
        <title>Autographa californica multiple nucleopolyhedrovirus ac66 is required for the efficient egress of nucleocapsids from the nucleus, general synthesis of preoccluded virions and occlusion body formation.</title>
        <authorList>
            <person name="Ke J."/>
            <person name="Wang J."/>
            <person name="Deng R."/>
            <person name="Wang X."/>
        </authorList>
    </citation>
    <scope>FUNCTION</scope>
</reference>
<reference key="3">
    <citation type="journal article" date="2018" name="J. Virol.">
        <title>Autographa californica Nucleopolyhedrovirus AC141 (Exon0), a potential E3 ubiquitin ligase, interacts with viral Ubiquitin and AC66 to facilitate nucleocapsid egress.</title>
        <authorList>
            <person name="Biswas S."/>
            <person name="Willis L.G."/>
            <person name="Fang M."/>
            <person name="Nie Y."/>
            <person name="Theilmann D.A."/>
        </authorList>
    </citation>
    <scope>INTERACTION WITH IE0 AND VUBI</scope>
    <scope>SUBCELLULAR LOCATION</scope>
</reference>
<comment type="function">
    <text evidence="2">Plays an essential role in the efficient egress of nucleocapsids from the host nucleus to the cytoplasm.</text>
</comment>
<comment type="subunit">
    <text evidence="3">Interacts with the putative E3 ligase IE0 and with viral ubiquitin/vUbi.</text>
</comment>
<comment type="subcellular location">
    <subcellularLocation>
        <location evidence="3">Host nucleus</location>
    </subcellularLocation>
    <subcellularLocation>
        <location evidence="3">Host cytoplasm</location>
    </subcellularLocation>
    <text evidence="3">Localizes mostly in the ring zone of the host nucleus. Small amounts are observed in the cytoplasm.</text>
</comment>
<keyword id="KW-1035">Host cytoplasm</keyword>
<keyword id="KW-1048">Host nucleus</keyword>
<keyword id="KW-1185">Reference proteome</keyword>